<name>EPMA_VIBVY</name>
<organism>
    <name type="scientific">Vibrio vulnificus (strain YJ016)</name>
    <dbReference type="NCBI Taxonomy" id="196600"/>
    <lineage>
        <taxon>Bacteria</taxon>
        <taxon>Pseudomonadati</taxon>
        <taxon>Pseudomonadota</taxon>
        <taxon>Gammaproteobacteria</taxon>
        <taxon>Vibrionales</taxon>
        <taxon>Vibrionaceae</taxon>
        <taxon>Vibrio</taxon>
    </lineage>
</organism>
<comment type="function">
    <text evidence="1">With EpmB is involved in the beta-lysylation step of the post-translational modification of translation elongation factor P (EF-P). Catalyzes the ATP-dependent activation of (R)-beta-lysine produced by EpmB, forming a lysyl-adenylate, from which the beta-lysyl moiety is then transferred to the epsilon-amino group of a conserved specific lysine residue in EF-P.</text>
</comment>
<comment type="catalytic activity">
    <reaction evidence="1">
        <text>D-beta-lysine + L-lysyl-[protein] + ATP = N(6)-((3R)-3,6-diaminohexanoyl)-L-lysyl-[protein] + AMP + diphosphate + H(+)</text>
        <dbReference type="Rhea" id="RHEA:83435"/>
        <dbReference type="Rhea" id="RHEA-COMP:9752"/>
        <dbReference type="Rhea" id="RHEA-COMP:20131"/>
        <dbReference type="ChEBI" id="CHEBI:15378"/>
        <dbReference type="ChEBI" id="CHEBI:29969"/>
        <dbReference type="ChEBI" id="CHEBI:30616"/>
        <dbReference type="ChEBI" id="CHEBI:33019"/>
        <dbReference type="ChEBI" id="CHEBI:84138"/>
        <dbReference type="ChEBI" id="CHEBI:156053"/>
        <dbReference type="ChEBI" id="CHEBI:456215"/>
    </reaction>
    <physiologicalReaction direction="left-to-right" evidence="1">
        <dbReference type="Rhea" id="RHEA:83436"/>
    </physiologicalReaction>
</comment>
<comment type="subunit">
    <text evidence="1">Homodimer.</text>
</comment>
<comment type="similarity">
    <text evidence="1">Belongs to the class-II aminoacyl-tRNA synthetase family. EpmA subfamily.</text>
</comment>
<feature type="chain" id="PRO_0000152733" description="Elongation factor P--(R)-beta-lysine ligase">
    <location>
        <begin position="1"/>
        <end position="323"/>
    </location>
</feature>
<feature type="binding site" evidence="1">
    <location>
        <begin position="74"/>
        <end position="76"/>
    </location>
    <ligand>
        <name>substrate</name>
    </ligand>
</feature>
<feature type="binding site" evidence="1">
    <location>
        <begin position="98"/>
        <end position="100"/>
    </location>
    <ligand>
        <name>ATP</name>
        <dbReference type="ChEBI" id="CHEBI:30616"/>
    </ligand>
</feature>
<feature type="binding site" evidence="1">
    <location>
        <position position="107"/>
    </location>
    <ligand>
        <name>ATP</name>
        <dbReference type="ChEBI" id="CHEBI:30616"/>
    </ligand>
</feature>
<feature type="binding site" evidence="1">
    <location>
        <position position="116"/>
    </location>
    <ligand>
        <name>substrate</name>
    </ligand>
</feature>
<feature type="binding site" evidence="1">
    <location>
        <begin position="242"/>
        <end position="243"/>
    </location>
    <ligand>
        <name>ATP</name>
        <dbReference type="ChEBI" id="CHEBI:30616"/>
    </ligand>
</feature>
<feature type="binding site" evidence="1">
    <location>
        <position position="249"/>
    </location>
    <ligand>
        <name>substrate</name>
    </ligand>
</feature>
<feature type="binding site" evidence="1">
    <location>
        <position position="298"/>
    </location>
    <ligand>
        <name>ATP</name>
        <dbReference type="ChEBI" id="CHEBI:30616"/>
    </ligand>
</feature>
<dbReference type="EC" id="6.3.2.-" evidence="1"/>
<dbReference type="EMBL" id="BA000037">
    <property type="protein sequence ID" value="BAC95859.1"/>
    <property type="molecule type" value="Genomic_DNA"/>
</dbReference>
<dbReference type="RefSeq" id="WP_011079255.1">
    <property type="nucleotide sequence ID" value="NC_005139.1"/>
</dbReference>
<dbReference type="SMR" id="Q7MGX9"/>
<dbReference type="STRING" id="672.VV93_v1c28190"/>
<dbReference type="KEGG" id="vvy:VV3096"/>
<dbReference type="PATRIC" id="fig|196600.6.peg.3070"/>
<dbReference type="eggNOG" id="COG2269">
    <property type="taxonomic scope" value="Bacteria"/>
</dbReference>
<dbReference type="HOGENOM" id="CLU_008255_1_1_6"/>
<dbReference type="Proteomes" id="UP000002675">
    <property type="component" value="Chromosome I"/>
</dbReference>
<dbReference type="GO" id="GO:0005829">
    <property type="term" value="C:cytosol"/>
    <property type="evidence" value="ECO:0007669"/>
    <property type="project" value="TreeGrafter"/>
</dbReference>
<dbReference type="GO" id="GO:0016880">
    <property type="term" value="F:acid-ammonia (or amide) ligase activity"/>
    <property type="evidence" value="ECO:0007669"/>
    <property type="project" value="UniProtKB-UniRule"/>
</dbReference>
<dbReference type="GO" id="GO:0005524">
    <property type="term" value="F:ATP binding"/>
    <property type="evidence" value="ECO:0007669"/>
    <property type="project" value="UniProtKB-UniRule"/>
</dbReference>
<dbReference type="GO" id="GO:0004824">
    <property type="term" value="F:lysine-tRNA ligase activity"/>
    <property type="evidence" value="ECO:0007669"/>
    <property type="project" value="InterPro"/>
</dbReference>
<dbReference type="GO" id="GO:0000049">
    <property type="term" value="F:tRNA binding"/>
    <property type="evidence" value="ECO:0007669"/>
    <property type="project" value="TreeGrafter"/>
</dbReference>
<dbReference type="GO" id="GO:0006430">
    <property type="term" value="P:lysyl-tRNA aminoacylation"/>
    <property type="evidence" value="ECO:0007669"/>
    <property type="project" value="InterPro"/>
</dbReference>
<dbReference type="FunFam" id="3.30.930.10:FF:000017">
    <property type="entry name" value="Elongation factor P--(R)-beta-lysine ligase"/>
    <property type="match status" value="1"/>
</dbReference>
<dbReference type="Gene3D" id="3.30.930.10">
    <property type="entry name" value="Bira Bifunctional Protein, Domain 2"/>
    <property type="match status" value="1"/>
</dbReference>
<dbReference type="HAMAP" id="MF_00174">
    <property type="entry name" value="EF_P_modif_A"/>
    <property type="match status" value="1"/>
</dbReference>
<dbReference type="InterPro" id="IPR004364">
    <property type="entry name" value="Aa-tRNA-synt_II"/>
</dbReference>
<dbReference type="InterPro" id="IPR006195">
    <property type="entry name" value="aa-tRNA-synth_II"/>
</dbReference>
<dbReference type="InterPro" id="IPR045864">
    <property type="entry name" value="aa-tRNA-synth_II/BPL/LPL"/>
</dbReference>
<dbReference type="InterPro" id="IPR004525">
    <property type="entry name" value="EpmA"/>
</dbReference>
<dbReference type="InterPro" id="IPR018149">
    <property type="entry name" value="Lys-tRNA-synth_II_C"/>
</dbReference>
<dbReference type="NCBIfam" id="TIGR00462">
    <property type="entry name" value="genX"/>
    <property type="match status" value="1"/>
</dbReference>
<dbReference type="NCBIfam" id="NF006828">
    <property type="entry name" value="PRK09350.1"/>
    <property type="match status" value="1"/>
</dbReference>
<dbReference type="PANTHER" id="PTHR42918:SF6">
    <property type="entry name" value="ELONGATION FACTOR P--(R)-BETA-LYSINE LIGASE"/>
    <property type="match status" value="1"/>
</dbReference>
<dbReference type="PANTHER" id="PTHR42918">
    <property type="entry name" value="LYSYL-TRNA SYNTHETASE"/>
    <property type="match status" value="1"/>
</dbReference>
<dbReference type="Pfam" id="PF00152">
    <property type="entry name" value="tRNA-synt_2"/>
    <property type="match status" value="1"/>
</dbReference>
<dbReference type="PRINTS" id="PR00982">
    <property type="entry name" value="TRNASYNTHLYS"/>
</dbReference>
<dbReference type="SUPFAM" id="SSF55681">
    <property type="entry name" value="Class II aaRS and biotin synthetases"/>
    <property type="match status" value="1"/>
</dbReference>
<dbReference type="PROSITE" id="PS50862">
    <property type="entry name" value="AA_TRNA_LIGASE_II"/>
    <property type="match status" value="1"/>
</dbReference>
<sequence length="323" mass="36147">MQADWKPTASIEQLRQRAVLIANIRQFFAQRGVLEVDTPAMSHATVTDIHLHTFQTEFVGPGYAQGRHLHLMTSPEFHMKRLLAAGSGCIYQMAKAFRNEENGRHHNPEFTMLEWYRVGFDHHQLMDEMDDLLQLILKCGTAERMTYQQAFLTVLGVCPLEGSMAELKSVAARLGLSDIAEPEEDRDTLLQLLFSIGVEAKIGQQVPAFVYDFPASQAALAKINPNDPRVADRFEVYFKGIELANGFHELDNPQEQLTRFEQDNAKRIDMGLTPQPIDYHLIAALESGLPACAGVALGVDRLIMLSLGCTHIDEITAFPFPIA</sequence>
<keyword id="KW-0067">ATP-binding</keyword>
<keyword id="KW-0436">Ligase</keyword>
<keyword id="KW-0547">Nucleotide-binding</keyword>
<gene>
    <name evidence="1" type="primary">epmA</name>
    <name type="synonym">yjeA</name>
    <name type="ordered locus">VV3096</name>
</gene>
<evidence type="ECO:0000255" key="1">
    <source>
        <dbReference type="HAMAP-Rule" id="MF_00174"/>
    </source>
</evidence>
<accession>Q7MGX9</accession>
<protein>
    <recommendedName>
        <fullName evidence="1">Elongation factor P--(R)-beta-lysine ligase</fullName>
        <shortName evidence="1">EF-P--(R)-beta-lysine ligase</shortName>
        <ecNumber evidence="1">6.3.2.-</ecNumber>
    </recommendedName>
    <alternativeName>
        <fullName evidence="1">EF-P post-translational modification enzyme A</fullName>
    </alternativeName>
    <alternativeName>
        <fullName evidence="1">EF-P-lysine lysyltransferase</fullName>
    </alternativeName>
</protein>
<reference key="1">
    <citation type="journal article" date="2003" name="Genome Res.">
        <title>Comparative genome analysis of Vibrio vulnificus, a marine pathogen.</title>
        <authorList>
            <person name="Chen C.-Y."/>
            <person name="Wu K.-M."/>
            <person name="Chang Y.-C."/>
            <person name="Chang C.-H."/>
            <person name="Tsai H.-C."/>
            <person name="Liao T.-L."/>
            <person name="Liu Y.-M."/>
            <person name="Chen H.-J."/>
            <person name="Shen A.B.-T."/>
            <person name="Li J.-C."/>
            <person name="Su T.-L."/>
            <person name="Shao C.-P."/>
            <person name="Lee C.-T."/>
            <person name="Hor L.-I."/>
            <person name="Tsai S.-F."/>
        </authorList>
    </citation>
    <scope>NUCLEOTIDE SEQUENCE [LARGE SCALE GENOMIC DNA]</scope>
    <source>
        <strain>YJ016</strain>
    </source>
</reference>
<proteinExistence type="inferred from homology"/>